<dbReference type="EC" id="3.1.26.4" evidence="1"/>
<dbReference type="EMBL" id="CP000302">
    <property type="protein sequence ID" value="ABE55302.1"/>
    <property type="molecule type" value="Genomic_DNA"/>
</dbReference>
<dbReference type="RefSeq" id="WP_011496458.1">
    <property type="nucleotide sequence ID" value="NC_007954.1"/>
</dbReference>
<dbReference type="SMR" id="Q12MM4"/>
<dbReference type="STRING" id="318161.Sden_2019"/>
<dbReference type="KEGG" id="sdn:Sden_2019"/>
<dbReference type="eggNOG" id="COG0328">
    <property type="taxonomic scope" value="Bacteria"/>
</dbReference>
<dbReference type="HOGENOM" id="CLU_030894_6_0_6"/>
<dbReference type="Proteomes" id="UP000001982">
    <property type="component" value="Chromosome"/>
</dbReference>
<dbReference type="GO" id="GO:0005737">
    <property type="term" value="C:cytoplasm"/>
    <property type="evidence" value="ECO:0007669"/>
    <property type="project" value="UniProtKB-SubCell"/>
</dbReference>
<dbReference type="GO" id="GO:0000287">
    <property type="term" value="F:magnesium ion binding"/>
    <property type="evidence" value="ECO:0007669"/>
    <property type="project" value="UniProtKB-UniRule"/>
</dbReference>
<dbReference type="GO" id="GO:0003676">
    <property type="term" value="F:nucleic acid binding"/>
    <property type="evidence" value="ECO:0007669"/>
    <property type="project" value="InterPro"/>
</dbReference>
<dbReference type="GO" id="GO:0004523">
    <property type="term" value="F:RNA-DNA hybrid ribonuclease activity"/>
    <property type="evidence" value="ECO:0007669"/>
    <property type="project" value="UniProtKB-UniRule"/>
</dbReference>
<dbReference type="GO" id="GO:0043137">
    <property type="term" value="P:DNA replication, removal of RNA primer"/>
    <property type="evidence" value="ECO:0007669"/>
    <property type="project" value="TreeGrafter"/>
</dbReference>
<dbReference type="CDD" id="cd09278">
    <property type="entry name" value="RNase_HI_prokaryote_like"/>
    <property type="match status" value="1"/>
</dbReference>
<dbReference type="FunFam" id="3.30.420.10:FF:000008">
    <property type="entry name" value="Ribonuclease H"/>
    <property type="match status" value="1"/>
</dbReference>
<dbReference type="Gene3D" id="3.30.420.10">
    <property type="entry name" value="Ribonuclease H-like superfamily/Ribonuclease H"/>
    <property type="match status" value="1"/>
</dbReference>
<dbReference type="HAMAP" id="MF_00042">
    <property type="entry name" value="RNase_H"/>
    <property type="match status" value="1"/>
</dbReference>
<dbReference type="InterPro" id="IPR050092">
    <property type="entry name" value="RNase_H"/>
</dbReference>
<dbReference type="InterPro" id="IPR012337">
    <property type="entry name" value="RNaseH-like_sf"/>
</dbReference>
<dbReference type="InterPro" id="IPR002156">
    <property type="entry name" value="RNaseH_domain"/>
</dbReference>
<dbReference type="InterPro" id="IPR036397">
    <property type="entry name" value="RNaseH_sf"/>
</dbReference>
<dbReference type="InterPro" id="IPR022892">
    <property type="entry name" value="RNaseHI"/>
</dbReference>
<dbReference type="NCBIfam" id="NF001236">
    <property type="entry name" value="PRK00203.1"/>
    <property type="match status" value="1"/>
</dbReference>
<dbReference type="PANTHER" id="PTHR10642">
    <property type="entry name" value="RIBONUCLEASE H1"/>
    <property type="match status" value="1"/>
</dbReference>
<dbReference type="PANTHER" id="PTHR10642:SF26">
    <property type="entry name" value="RIBONUCLEASE H1"/>
    <property type="match status" value="1"/>
</dbReference>
<dbReference type="Pfam" id="PF00075">
    <property type="entry name" value="RNase_H"/>
    <property type="match status" value="1"/>
</dbReference>
<dbReference type="SUPFAM" id="SSF53098">
    <property type="entry name" value="Ribonuclease H-like"/>
    <property type="match status" value="1"/>
</dbReference>
<dbReference type="PROSITE" id="PS50879">
    <property type="entry name" value="RNASE_H_1"/>
    <property type="match status" value="1"/>
</dbReference>
<organism>
    <name type="scientific">Shewanella denitrificans (strain OS217 / ATCC BAA-1090 / DSM 15013)</name>
    <dbReference type="NCBI Taxonomy" id="318161"/>
    <lineage>
        <taxon>Bacteria</taxon>
        <taxon>Pseudomonadati</taxon>
        <taxon>Pseudomonadota</taxon>
        <taxon>Gammaproteobacteria</taxon>
        <taxon>Alteromonadales</taxon>
        <taxon>Shewanellaceae</taxon>
        <taxon>Shewanella</taxon>
    </lineage>
</organism>
<name>RNH_SHEDO</name>
<evidence type="ECO:0000255" key="1">
    <source>
        <dbReference type="HAMAP-Rule" id="MF_00042"/>
    </source>
</evidence>
<evidence type="ECO:0000255" key="2">
    <source>
        <dbReference type="PROSITE-ProRule" id="PRU00408"/>
    </source>
</evidence>
<protein>
    <recommendedName>
        <fullName evidence="1">Ribonuclease H</fullName>
        <shortName evidence="1">RNase H</shortName>
        <ecNumber evidence="1">3.1.26.4</ecNumber>
    </recommendedName>
</protein>
<comment type="function">
    <text evidence="1">Endonuclease that specifically degrades the RNA of RNA-DNA hybrids.</text>
</comment>
<comment type="catalytic activity">
    <reaction evidence="1">
        <text>Endonucleolytic cleavage to 5'-phosphomonoester.</text>
        <dbReference type="EC" id="3.1.26.4"/>
    </reaction>
</comment>
<comment type="cofactor">
    <cofactor evidence="1">
        <name>Mg(2+)</name>
        <dbReference type="ChEBI" id="CHEBI:18420"/>
    </cofactor>
    <text evidence="1">Binds 1 Mg(2+) ion per subunit. May bind a second metal ion at a regulatory site, or after substrate binding.</text>
</comment>
<comment type="subunit">
    <text evidence="1">Monomer.</text>
</comment>
<comment type="subcellular location">
    <subcellularLocation>
        <location evidence="1">Cytoplasm</location>
    </subcellularLocation>
</comment>
<comment type="similarity">
    <text evidence="1">Belongs to the RNase H family.</text>
</comment>
<reference key="1">
    <citation type="submission" date="2006-03" db="EMBL/GenBank/DDBJ databases">
        <title>Complete sequence of Shewanella denitrificans OS217.</title>
        <authorList>
            <consortium name="US DOE Joint Genome Institute"/>
            <person name="Copeland A."/>
            <person name="Lucas S."/>
            <person name="Lapidus A."/>
            <person name="Barry K."/>
            <person name="Detter J.C."/>
            <person name="Glavina del Rio T."/>
            <person name="Hammon N."/>
            <person name="Israni S."/>
            <person name="Dalin E."/>
            <person name="Tice H."/>
            <person name="Pitluck S."/>
            <person name="Brettin T."/>
            <person name="Bruce D."/>
            <person name="Han C."/>
            <person name="Tapia R."/>
            <person name="Gilna P."/>
            <person name="Kiss H."/>
            <person name="Schmutz J."/>
            <person name="Larimer F."/>
            <person name="Land M."/>
            <person name="Hauser L."/>
            <person name="Kyrpides N."/>
            <person name="Lykidis A."/>
            <person name="Richardson P."/>
        </authorList>
    </citation>
    <scope>NUCLEOTIDE SEQUENCE [LARGE SCALE GENOMIC DNA]</scope>
    <source>
        <strain>OS217 / ATCC BAA-1090 / DSM 15013</strain>
    </source>
</reference>
<gene>
    <name evidence="1" type="primary">rnhA</name>
    <name type="ordered locus">Sden_2019</name>
</gene>
<feature type="chain" id="PRO_0000332675" description="Ribonuclease H">
    <location>
        <begin position="1"/>
        <end position="159"/>
    </location>
</feature>
<feature type="domain" description="RNase H type-1" evidence="2">
    <location>
        <begin position="4"/>
        <end position="145"/>
    </location>
</feature>
<feature type="binding site" evidence="1">
    <location>
        <position position="13"/>
    </location>
    <ligand>
        <name>Mg(2+)</name>
        <dbReference type="ChEBI" id="CHEBI:18420"/>
        <label>1</label>
    </ligand>
</feature>
<feature type="binding site" evidence="1">
    <location>
        <position position="13"/>
    </location>
    <ligand>
        <name>Mg(2+)</name>
        <dbReference type="ChEBI" id="CHEBI:18420"/>
        <label>2</label>
    </ligand>
</feature>
<feature type="binding site" evidence="1">
    <location>
        <position position="51"/>
    </location>
    <ligand>
        <name>Mg(2+)</name>
        <dbReference type="ChEBI" id="CHEBI:18420"/>
        <label>1</label>
    </ligand>
</feature>
<feature type="binding site" evidence="1">
    <location>
        <position position="73"/>
    </location>
    <ligand>
        <name>Mg(2+)</name>
        <dbReference type="ChEBI" id="CHEBI:18420"/>
        <label>1</label>
    </ligand>
</feature>
<feature type="binding site" evidence="1">
    <location>
        <position position="137"/>
    </location>
    <ligand>
        <name>Mg(2+)</name>
        <dbReference type="ChEBI" id="CHEBI:18420"/>
        <label>2</label>
    </ligand>
</feature>
<accession>Q12MM4</accession>
<proteinExistence type="inferred from homology"/>
<sequence>MMTTHKQVNIYTDGSCLGNPGPGGYGIVMQYKQHSKEIADGFALTTNNRMELLAPIIALEALMEPCIVTLTSDSQYMRQGITQWIHGWKKKGWMTSNKQAVKNVDLWKRLDSVSQRHNIDWRWVKGHTGHKQNERCDKLARDAAEAKPKQIDTGYQESL</sequence>
<keyword id="KW-0963">Cytoplasm</keyword>
<keyword id="KW-0255">Endonuclease</keyword>
<keyword id="KW-0378">Hydrolase</keyword>
<keyword id="KW-0460">Magnesium</keyword>
<keyword id="KW-0479">Metal-binding</keyword>
<keyword id="KW-0540">Nuclease</keyword>
<keyword id="KW-1185">Reference proteome</keyword>